<protein>
    <recommendedName>
        <fullName>Phytoene desaturase (neurosporene-forming)</fullName>
        <ecNumber>1.3.99.28</ecNumber>
    </recommendedName>
    <alternativeName>
        <fullName>3-step phytoene desaturase</fullName>
    </alternativeName>
    <alternativeName>
        <fullName>Phytoene dehydrogenase</fullName>
    </alternativeName>
</protein>
<dbReference type="EC" id="1.3.99.28"/>
<dbReference type="EMBL" id="S71770">
    <property type="protein sequence ID" value="AAB31138.1"/>
    <property type="molecule type" value="Genomic_DNA"/>
</dbReference>
<dbReference type="EMBL" id="AJ010302">
    <property type="protein sequence ID" value="CAB38739.1"/>
    <property type="molecule type" value="Genomic_DNA"/>
</dbReference>
<dbReference type="EMBL" id="AF195122">
    <property type="protein sequence ID" value="AAF24289.1"/>
    <property type="molecule type" value="Genomic_DNA"/>
</dbReference>
<dbReference type="EMBL" id="CP000143">
    <property type="protein sequence ID" value="ABA79444.1"/>
    <property type="molecule type" value="Genomic_DNA"/>
</dbReference>
<dbReference type="PIR" id="S49620">
    <property type="entry name" value="S49620"/>
</dbReference>
<dbReference type="PIR" id="T50745">
    <property type="entry name" value="T50745"/>
</dbReference>
<dbReference type="RefSeq" id="WP_002720435.1">
    <property type="nucleotide sequence ID" value="NZ_CP030271.1"/>
</dbReference>
<dbReference type="RefSeq" id="YP_353345.1">
    <property type="nucleotide sequence ID" value="NC_007493.2"/>
</dbReference>
<dbReference type="SMR" id="P54980"/>
<dbReference type="STRING" id="272943.RSP_0271"/>
<dbReference type="EnsemblBacteria" id="ABA79444">
    <property type="protein sequence ID" value="ABA79444"/>
    <property type="gene ID" value="RSP_0271"/>
</dbReference>
<dbReference type="GeneID" id="3719280"/>
<dbReference type="KEGG" id="rsp:RSP_0271"/>
<dbReference type="PATRIC" id="fig|272943.9.peg.2214"/>
<dbReference type="eggNOG" id="COG1233">
    <property type="taxonomic scope" value="Bacteria"/>
</dbReference>
<dbReference type="OrthoDB" id="9774675at2"/>
<dbReference type="PhylomeDB" id="P54980"/>
<dbReference type="BRENDA" id="1.3.99.28">
    <property type="organism ID" value="5383"/>
</dbReference>
<dbReference type="Proteomes" id="UP000002703">
    <property type="component" value="Chromosome 1"/>
</dbReference>
<dbReference type="GO" id="GO:0016627">
    <property type="term" value="F:oxidoreductase activity, acting on the CH-CH group of donors"/>
    <property type="evidence" value="ECO:0007669"/>
    <property type="project" value="UniProtKB-ARBA"/>
</dbReference>
<dbReference type="GO" id="GO:0016117">
    <property type="term" value="P:carotenoid biosynthetic process"/>
    <property type="evidence" value="ECO:0007669"/>
    <property type="project" value="UniProtKB-KW"/>
</dbReference>
<dbReference type="FunFam" id="3.50.50.60:FF:000378">
    <property type="entry name" value="Phytoene desaturase"/>
    <property type="match status" value="1"/>
</dbReference>
<dbReference type="FunFam" id="3.50.50.60:FF:000413">
    <property type="entry name" value="Phytoene desaturase (lycopene-forming)"/>
    <property type="match status" value="1"/>
</dbReference>
<dbReference type="Gene3D" id="3.50.50.60">
    <property type="entry name" value="FAD/NAD(P)-binding domain"/>
    <property type="match status" value="2"/>
</dbReference>
<dbReference type="InterPro" id="IPR002937">
    <property type="entry name" value="Amino_oxidase"/>
</dbReference>
<dbReference type="InterPro" id="IPR014105">
    <property type="entry name" value="Carotenoid/retinoid_OxRdtase"/>
</dbReference>
<dbReference type="InterPro" id="IPR036188">
    <property type="entry name" value="FAD/NAD-bd_sf"/>
</dbReference>
<dbReference type="InterPro" id="IPR008150">
    <property type="entry name" value="Phytoene_DH_bac_CS"/>
</dbReference>
<dbReference type="NCBIfam" id="TIGR02734">
    <property type="entry name" value="crtI_fam"/>
    <property type="match status" value="1"/>
</dbReference>
<dbReference type="PANTHER" id="PTHR43734:SF3">
    <property type="entry name" value="B-CAROTENE KETOLASE"/>
    <property type="match status" value="1"/>
</dbReference>
<dbReference type="PANTHER" id="PTHR43734">
    <property type="entry name" value="PHYTOENE DESATURASE"/>
    <property type="match status" value="1"/>
</dbReference>
<dbReference type="Pfam" id="PF01593">
    <property type="entry name" value="Amino_oxidase"/>
    <property type="match status" value="1"/>
</dbReference>
<dbReference type="SUPFAM" id="SSF51905">
    <property type="entry name" value="FAD/NAD(P)-binding domain"/>
    <property type="match status" value="1"/>
</dbReference>
<dbReference type="PROSITE" id="PS00982">
    <property type="entry name" value="PHYTOENE_DH"/>
    <property type="match status" value="1"/>
</dbReference>
<reference key="1">
    <citation type="journal article" date="1994" name="J. Bacteriol.">
        <title>Early steps in carotenoid biosynthesis: sequences and transcriptional analysis of the crtI and crtB genes of Rhodobacter sphaeroides and overexpression and reactivation of crtI in Escherichia coli and R. sphaeroides.</title>
        <authorList>
            <person name="Lang H.P."/>
            <person name="Cogdell R.J."/>
            <person name="Gardiner A.T."/>
            <person name="Hunter C.N."/>
        </authorList>
    </citation>
    <scope>NUCLEOTIDE SEQUENCE [GENOMIC DNA]</scope>
    <source>
        <strain>ATCC 17023 / DSM 158 / JCM 6121 / CCUG 31486 / LMG 2827 / NBRC 12203 / NCIMB 8253 / ATH 2.4.1.</strain>
    </source>
</reference>
<reference key="2">
    <citation type="journal article" date="1995" name="J. Bacteriol.">
        <title>Complete DNA sequence, specific Tn5 insertion map, and gene assignment of the carotenoid biosynthesis pathway of Rhodobacter sphaeroides.</title>
        <authorList>
            <person name="Lang H.P."/>
            <person name="Cogdell R.J."/>
            <person name="Takaichi S."/>
            <person name="Hunter C.N."/>
        </authorList>
    </citation>
    <scope>NUCLEOTIDE SEQUENCE [GENOMIC DNA]</scope>
</reference>
<reference key="3">
    <citation type="journal article" date="2000" name="Nucleic Acids Res.">
        <title>DNA sequence analysis of the photosynthesis region of Rhodobacter sphaeroides 2.4.1.</title>
        <authorList>
            <person name="Choudhary M."/>
            <person name="Kaplan S."/>
        </authorList>
    </citation>
    <scope>NUCLEOTIDE SEQUENCE [GENOMIC DNA]</scope>
</reference>
<reference key="4">
    <citation type="submission" date="2005-09" db="EMBL/GenBank/DDBJ databases">
        <title>Complete sequence of chromosome 1 of Rhodobacter sphaeroides 2.4.1.</title>
        <authorList>
            <person name="Copeland A."/>
            <person name="Lucas S."/>
            <person name="Lapidus A."/>
            <person name="Barry K."/>
            <person name="Detter J.C."/>
            <person name="Glavina T."/>
            <person name="Hammon N."/>
            <person name="Israni S."/>
            <person name="Pitluck S."/>
            <person name="Richardson P."/>
            <person name="Mackenzie C."/>
            <person name="Choudhary M."/>
            <person name="Larimer F."/>
            <person name="Hauser L.J."/>
            <person name="Land M."/>
            <person name="Donohue T.J."/>
            <person name="Kaplan S."/>
        </authorList>
    </citation>
    <scope>NUCLEOTIDE SEQUENCE [LARGE SCALE GENOMIC DNA]</scope>
    <source>
        <strain>ATCC 17023 / DSM 158 / JCM 6121 / CCUG 31486 / LMG 2827 / NBRC 12203 / NCIMB 8253 / ATH 2.4.1.</strain>
    </source>
</reference>
<sequence length="518" mass="57231">MPSISPASDADRALVIGSGLGGLAAAMRLGAKGWRVTVIDKLDVPGGRGSSITQEGHRFDLGPTIVTVPQSLRDLWKTCGRDFDADVELKPIDPFYEVRWPDGSHFTVRQSTEAMKAEVARLSPGDVAGYEKFLKDSEKRYWFGYEDLGRRSMHKLWDLIKVLPTFGMMRADRSVYQHAALRVKDERLRMALSFHPLFIGGDPFNVTSMYILVSQLEKEFGVHYAIGGVAAIAAAMAKVIEGQGGSFRMNTEVDEILVEKGTATGVRLASGEVLRAGLVVSNADAGHTYMRLLRNHPRRRWTDAHVKSRRWSMGLFVWYFGTKGTKGMWPDVGHHTIVNAPRYKGLVEDIFLKGKLAKDMSLYIHRPSITDPTVAPEGDDTFYALSPVPHLKQAQPVDWQAVAEPYRESVLEVLEQSMPGIGERIGPSLVFTPETFRDRYLSPWGAGFSIEPRILQSAWFRPHNISEEVANLFLVGAGTHPGAGVPGVIGSAEVMAKLAPDAPRARREAEPAERLAAE</sequence>
<proteinExistence type="inferred from homology"/>
<comment type="function">
    <text evidence="1">Converts phytoene into all-trans-neurosporene as the major product, via the intermediary of phytofluene and zeta-carotene, by the introduction of three double bonds.</text>
</comment>
<comment type="catalytic activity">
    <reaction>
        <text>15-cis-phytoene + 3 A = all-trans-neurosporene + 3 AH2</text>
        <dbReference type="Rhea" id="RHEA:30599"/>
        <dbReference type="ChEBI" id="CHEBI:13193"/>
        <dbReference type="ChEBI" id="CHEBI:16833"/>
        <dbReference type="ChEBI" id="CHEBI:17499"/>
        <dbReference type="ChEBI" id="CHEBI:27787"/>
        <dbReference type="EC" id="1.3.99.28"/>
    </reaction>
</comment>
<comment type="cofactor">
    <cofactor evidence="1">
        <name>FAD</name>
        <dbReference type="ChEBI" id="CHEBI:57692"/>
    </cofactor>
</comment>
<comment type="pathway">
    <text>Carotenoid biosynthesis.</text>
</comment>
<comment type="similarity">
    <text evidence="3">Belongs to the carotenoid/retinoid oxidoreductase family.</text>
</comment>
<evidence type="ECO:0000250" key="1"/>
<evidence type="ECO:0000255" key="2"/>
<evidence type="ECO:0000305" key="3"/>
<feature type="chain" id="PRO_0000067691" description="Phytoene desaturase (neurosporene-forming)">
    <location>
        <begin position="1"/>
        <end position="518"/>
    </location>
</feature>
<feature type="binding site" evidence="2">
    <location>
        <begin position="14"/>
        <end position="47"/>
    </location>
    <ligand>
        <name>FAD</name>
        <dbReference type="ChEBI" id="CHEBI:57692"/>
    </ligand>
</feature>
<feature type="sequence conflict" description="In Ref. 3; AAF24289." evidence="3" ref="3">
    <original>R</original>
    <variation>C</variation>
    <location>
        <position position="73"/>
    </location>
</feature>
<feature type="sequence conflict" description="In Ref. 1 and 2." evidence="3" ref="1 2">
    <original>S</original>
    <variation>T</variation>
    <location>
        <position position="174"/>
    </location>
</feature>
<feature type="sequence conflict" description="In Ref. 3; AAF24289." evidence="3" ref="3">
    <original>L</original>
    <variation>F</variation>
    <location>
        <position position="292"/>
    </location>
</feature>
<feature type="sequence conflict" description="In Ref. 3; AAF24289." evidence="3" ref="3">
    <original>Q</original>
    <variation>P</variation>
    <location>
        <position position="395"/>
    </location>
</feature>
<gene>
    <name type="primary">crtI</name>
    <name type="ordered locus">RHOS4_18760</name>
    <name type="ORF">RSP_0271</name>
</gene>
<keyword id="KW-0125">Carotenoid biosynthesis</keyword>
<keyword id="KW-0274">FAD</keyword>
<keyword id="KW-0285">Flavoprotein</keyword>
<keyword id="KW-0560">Oxidoreductase</keyword>
<keyword id="KW-1185">Reference proteome</keyword>
<organism>
    <name type="scientific">Cereibacter sphaeroides (strain ATCC 17023 / DSM 158 / JCM 6121 / CCUG 31486 / LMG 2827 / NBRC 12203 / NCIMB 8253 / ATH 2.4.1.)</name>
    <name type="common">Rhodobacter sphaeroides</name>
    <dbReference type="NCBI Taxonomy" id="272943"/>
    <lineage>
        <taxon>Bacteria</taxon>
        <taxon>Pseudomonadati</taxon>
        <taxon>Pseudomonadota</taxon>
        <taxon>Alphaproteobacteria</taxon>
        <taxon>Rhodobacterales</taxon>
        <taxon>Paracoccaceae</taxon>
        <taxon>Cereibacter</taxon>
    </lineage>
</organism>
<accession>P54980</accession>
<accession>Q3J190</accession>
<accession>Q9RFD0</accession>
<name>CRTI_CERS4</name>